<accession>Q6FQH3</accession>
<comment type="subcellular location">
    <subcellularLocation>
        <location evidence="1">Cytoplasm</location>
    </subcellularLocation>
    <subcellularLocation>
        <location evidence="1">Nucleus</location>
    </subcellularLocation>
</comment>
<evidence type="ECO:0000250" key="1"/>
<evidence type="ECO:0000255" key="2">
    <source>
        <dbReference type="PROSITE-ProRule" id="PRU00286"/>
    </source>
</evidence>
<evidence type="ECO:0000256" key="3">
    <source>
        <dbReference type="SAM" id="MobiDB-lite"/>
    </source>
</evidence>
<organism>
    <name type="scientific">Candida glabrata (strain ATCC 2001 / BCRC 20586 / JCM 3761 / NBRC 0622 / NRRL Y-65 / CBS 138)</name>
    <name type="common">Yeast</name>
    <name type="synonym">Nakaseomyces glabratus</name>
    <dbReference type="NCBI Taxonomy" id="284593"/>
    <lineage>
        <taxon>Eukaryota</taxon>
        <taxon>Fungi</taxon>
        <taxon>Dikarya</taxon>
        <taxon>Ascomycota</taxon>
        <taxon>Saccharomycotina</taxon>
        <taxon>Saccharomycetes</taxon>
        <taxon>Saccharomycetales</taxon>
        <taxon>Saccharomycetaceae</taxon>
        <taxon>Nakaseomyces</taxon>
    </lineage>
</organism>
<feature type="chain" id="PRO_0000333576" description="J protein JJJ2">
    <location>
        <begin position="1"/>
        <end position="455"/>
    </location>
</feature>
<feature type="domain" description="J" evidence="2">
    <location>
        <begin position="12"/>
        <end position="76"/>
    </location>
</feature>
<feature type="region of interest" description="Disordered" evidence="3">
    <location>
        <begin position="104"/>
        <end position="241"/>
    </location>
</feature>
<feature type="compositionally biased region" description="Low complexity" evidence="3">
    <location>
        <begin position="133"/>
        <end position="144"/>
    </location>
</feature>
<feature type="compositionally biased region" description="Basic and acidic residues" evidence="3">
    <location>
        <begin position="156"/>
        <end position="168"/>
    </location>
</feature>
<name>JJJ2_CANGA</name>
<gene>
    <name type="primary">JJJ2</name>
    <name type="ordered locus">CAGL0I06226g</name>
</gene>
<sequence length="455" mass="52000">MSINDVTIDTSTYYSILGVPTNASTNEIRKSYMKLAKKLHPDKTKSEHTAELFKLVVDAHSILNNDQLRAEYDKKLILEGRFELHQHGAKQKNKDIRKGYTFKRNSKPYEQQPYGFGVQVPKGPHEESNYEANSNPHNENSSNNDTKMKSTNLHDTLSKDSEDKHGTDDASDIQPPTKSNDIANEVGSKRKSNSKDIHQDHSSNIGLNPLKKKKLEKKAVHATTTESRRYMRKKSEKKATPPIQPLADLQINDDWEKLREVLQRIEKEDSRGGKEFTLDIDVNEQMYNLSMESSDDEHTIPTKKRAKVGSNIQGNSRYFAQTAAYDMNQINANLGTRNTEDDRQASSKISITEIDDILDLLKERVPSPPKLGHLGVQRDQQNRALEYIKYTDELKKRILYVLSNSSTTEAMQHFNRHTQSVLAHKTMELRLCEKLTEIQKCQQGVIEYFSRTALG</sequence>
<proteinExistence type="inferred from homology"/>
<reference key="1">
    <citation type="journal article" date="2004" name="Nature">
        <title>Genome evolution in yeasts.</title>
        <authorList>
            <person name="Dujon B."/>
            <person name="Sherman D."/>
            <person name="Fischer G."/>
            <person name="Durrens P."/>
            <person name="Casaregola S."/>
            <person name="Lafontaine I."/>
            <person name="de Montigny J."/>
            <person name="Marck C."/>
            <person name="Neuveglise C."/>
            <person name="Talla E."/>
            <person name="Goffard N."/>
            <person name="Frangeul L."/>
            <person name="Aigle M."/>
            <person name="Anthouard V."/>
            <person name="Babour A."/>
            <person name="Barbe V."/>
            <person name="Barnay S."/>
            <person name="Blanchin S."/>
            <person name="Beckerich J.-M."/>
            <person name="Beyne E."/>
            <person name="Bleykasten C."/>
            <person name="Boisrame A."/>
            <person name="Boyer J."/>
            <person name="Cattolico L."/>
            <person name="Confanioleri F."/>
            <person name="de Daruvar A."/>
            <person name="Despons L."/>
            <person name="Fabre E."/>
            <person name="Fairhead C."/>
            <person name="Ferry-Dumazet H."/>
            <person name="Groppi A."/>
            <person name="Hantraye F."/>
            <person name="Hennequin C."/>
            <person name="Jauniaux N."/>
            <person name="Joyet P."/>
            <person name="Kachouri R."/>
            <person name="Kerrest A."/>
            <person name="Koszul R."/>
            <person name="Lemaire M."/>
            <person name="Lesur I."/>
            <person name="Ma L."/>
            <person name="Muller H."/>
            <person name="Nicaud J.-M."/>
            <person name="Nikolski M."/>
            <person name="Oztas S."/>
            <person name="Ozier-Kalogeropoulos O."/>
            <person name="Pellenz S."/>
            <person name="Potier S."/>
            <person name="Richard G.-F."/>
            <person name="Straub M.-L."/>
            <person name="Suleau A."/>
            <person name="Swennen D."/>
            <person name="Tekaia F."/>
            <person name="Wesolowski-Louvel M."/>
            <person name="Westhof E."/>
            <person name="Wirth B."/>
            <person name="Zeniou-Meyer M."/>
            <person name="Zivanovic Y."/>
            <person name="Bolotin-Fukuhara M."/>
            <person name="Thierry A."/>
            <person name="Bouchier C."/>
            <person name="Caudron B."/>
            <person name="Scarpelli C."/>
            <person name="Gaillardin C."/>
            <person name="Weissenbach J."/>
            <person name="Wincker P."/>
            <person name="Souciet J.-L."/>
        </authorList>
    </citation>
    <scope>NUCLEOTIDE SEQUENCE [LARGE SCALE GENOMIC DNA]</scope>
    <source>
        <strain>ATCC 2001 / BCRC 20586 / JCM 3761 / NBRC 0622 / NRRL Y-65 / CBS 138</strain>
    </source>
</reference>
<protein>
    <recommendedName>
        <fullName>J protein JJJ2</fullName>
    </recommendedName>
</protein>
<keyword id="KW-0143">Chaperone</keyword>
<keyword id="KW-0963">Cytoplasm</keyword>
<keyword id="KW-0539">Nucleus</keyword>
<keyword id="KW-1185">Reference proteome</keyword>
<dbReference type="EMBL" id="CR380955">
    <property type="protein sequence ID" value="CAG60458.1"/>
    <property type="molecule type" value="Genomic_DNA"/>
</dbReference>
<dbReference type="RefSeq" id="XP_447521.1">
    <property type="nucleotide sequence ID" value="XM_447521.1"/>
</dbReference>
<dbReference type="SMR" id="Q6FQH3"/>
<dbReference type="STRING" id="284593.Q6FQH3"/>
<dbReference type="EnsemblFungi" id="CAGL0I06226g-T">
    <property type="protein sequence ID" value="CAGL0I06226g-T-p1"/>
    <property type="gene ID" value="CAGL0I06226g"/>
</dbReference>
<dbReference type="KEGG" id="cgr:2889153"/>
<dbReference type="CGD" id="CAL0132588">
    <property type="gene designation" value="CAGL0I06226g"/>
</dbReference>
<dbReference type="VEuPathDB" id="FungiDB:CAGL0I06226g"/>
<dbReference type="eggNOG" id="KOG0714">
    <property type="taxonomic scope" value="Eukaryota"/>
</dbReference>
<dbReference type="HOGENOM" id="CLU_601280_0_0_1"/>
<dbReference type="InParanoid" id="Q6FQH3"/>
<dbReference type="Proteomes" id="UP000002428">
    <property type="component" value="Chromosome I"/>
</dbReference>
<dbReference type="GO" id="GO:0005789">
    <property type="term" value="C:endoplasmic reticulum membrane"/>
    <property type="evidence" value="ECO:0007669"/>
    <property type="project" value="TreeGrafter"/>
</dbReference>
<dbReference type="GO" id="GO:0005634">
    <property type="term" value="C:nucleus"/>
    <property type="evidence" value="ECO:0007669"/>
    <property type="project" value="UniProtKB-SubCell"/>
</dbReference>
<dbReference type="GO" id="GO:0030544">
    <property type="term" value="F:Hsp70 protein binding"/>
    <property type="evidence" value="ECO:0007669"/>
    <property type="project" value="TreeGrafter"/>
</dbReference>
<dbReference type="GO" id="GO:0071218">
    <property type="term" value="P:cellular response to misfolded protein"/>
    <property type="evidence" value="ECO:0007669"/>
    <property type="project" value="TreeGrafter"/>
</dbReference>
<dbReference type="GO" id="GO:0051085">
    <property type="term" value="P:chaperone cofactor-dependent protein refolding"/>
    <property type="evidence" value="ECO:0007669"/>
    <property type="project" value="TreeGrafter"/>
</dbReference>
<dbReference type="CDD" id="cd06257">
    <property type="entry name" value="DnaJ"/>
    <property type="match status" value="1"/>
</dbReference>
<dbReference type="Gene3D" id="1.10.287.110">
    <property type="entry name" value="DnaJ domain"/>
    <property type="match status" value="1"/>
</dbReference>
<dbReference type="InterPro" id="IPR001623">
    <property type="entry name" value="DnaJ_domain"/>
</dbReference>
<dbReference type="InterPro" id="IPR018253">
    <property type="entry name" value="DnaJ_domain_CS"/>
</dbReference>
<dbReference type="InterPro" id="IPR051100">
    <property type="entry name" value="DnaJ_subfamily_B/C"/>
</dbReference>
<dbReference type="InterPro" id="IPR036869">
    <property type="entry name" value="J_dom_sf"/>
</dbReference>
<dbReference type="PANTHER" id="PTHR43908">
    <property type="entry name" value="AT29763P-RELATED"/>
    <property type="match status" value="1"/>
</dbReference>
<dbReference type="PANTHER" id="PTHR43908:SF3">
    <property type="entry name" value="AT29763P-RELATED"/>
    <property type="match status" value="1"/>
</dbReference>
<dbReference type="Pfam" id="PF00226">
    <property type="entry name" value="DnaJ"/>
    <property type="match status" value="1"/>
</dbReference>
<dbReference type="PRINTS" id="PR00625">
    <property type="entry name" value="JDOMAIN"/>
</dbReference>
<dbReference type="SMART" id="SM00271">
    <property type="entry name" value="DnaJ"/>
    <property type="match status" value="1"/>
</dbReference>
<dbReference type="SUPFAM" id="SSF46565">
    <property type="entry name" value="Chaperone J-domain"/>
    <property type="match status" value="1"/>
</dbReference>
<dbReference type="PROSITE" id="PS00636">
    <property type="entry name" value="DNAJ_1"/>
    <property type="match status" value="1"/>
</dbReference>
<dbReference type="PROSITE" id="PS50076">
    <property type="entry name" value="DNAJ_2"/>
    <property type="match status" value="1"/>
</dbReference>